<protein>
    <recommendedName>
        <fullName evidence="1">Protein translocase subunit SecA</fullName>
        <ecNumber evidence="1">7.4.2.8</ecNumber>
    </recommendedName>
</protein>
<proteinExistence type="inferred from homology"/>
<evidence type="ECO:0000255" key="1">
    <source>
        <dbReference type="HAMAP-Rule" id="MF_01382"/>
    </source>
</evidence>
<evidence type="ECO:0000256" key="2">
    <source>
        <dbReference type="SAM" id="MobiDB-lite"/>
    </source>
</evidence>
<organism>
    <name type="scientific">Geobacter sulfurreducens (strain ATCC 51573 / DSM 12127 / PCA)</name>
    <dbReference type="NCBI Taxonomy" id="243231"/>
    <lineage>
        <taxon>Bacteria</taxon>
        <taxon>Pseudomonadati</taxon>
        <taxon>Thermodesulfobacteriota</taxon>
        <taxon>Desulfuromonadia</taxon>
        <taxon>Geobacterales</taxon>
        <taxon>Geobacteraceae</taxon>
        <taxon>Geobacter</taxon>
    </lineage>
</organism>
<comment type="function">
    <text evidence="1">Part of the Sec protein translocase complex. Interacts with the SecYEG preprotein conducting channel. Has a central role in coupling the hydrolysis of ATP to the transfer of proteins into and across the cell membrane, serving as an ATP-driven molecular motor driving the stepwise translocation of polypeptide chains across the membrane.</text>
</comment>
<comment type="catalytic activity">
    <reaction evidence="1">
        <text>ATP + H2O + cellular proteinSide 1 = ADP + phosphate + cellular proteinSide 2.</text>
        <dbReference type="EC" id="7.4.2.8"/>
    </reaction>
</comment>
<comment type="cofactor">
    <cofactor evidence="1">
        <name>Zn(2+)</name>
        <dbReference type="ChEBI" id="CHEBI:29105"/>
    </cofactor>
    <text evidence="1">May bind 1 zinc ion per subunit.</text>
</comment>
<comment type="subunit">
    <text evidence="1">Monomer and homodimer. Part of the essential Sec protein translocation apparatus which comprises SecA, SecYEG and auxiliary proteins SecDF-YajC and YidC.</text>
</comment>
<comment type="subcellular location">
    <subcellularLocation>
        <location evidence="1">Cell inner membrane</location>
        <topology evidence="1">Peripheral membrane protein</topology>
        <orientation evidence="1">Cytoplasmic side</orientation>
    </subcellularLocation>
    <subcellularLocation>
        <location evidence="1">Cytoplasm</location>
    </subcellularLocation>
    <text evidence="1">Distribution is 50-50.</text>
</comment>
<comment type="similarity">
    <text evidence="1">Belongs to the SecA family.</text>
</comment>
<gene>
    <name evidence="1" type="primary">secA</name>
    <name type="ordered locus">GSU2050</name>
</gene>
<dbReference type="EC" id="7.4.2.8" evidence="1"/>
<dbReference type="EMBL" id="AE017180">
    <property type="protein sequence ID" value="AAR35426.1"/>
    <property type="molecule type" value="Genomic_DNA"/>
</dbReference>
<dbReference type="RefSeq" id="NP_953099.1">
    <property type="nucleotide sequence ID" value="NC_002939.5"/>
</dbReference>
<dbReference type="RefSeq" id="WP_010942693.1">
    <property type="nucleotide sequence ID" value="NC_002939.5"/>
</dbReference>
<dbReference type="SMR" id="Q74BJ1"/>
<dbReference type="FunCoup" id="Q74BJ1">
    <property type="interactions" value="636"/>
</dbReference>
<dbReference type="STRING" id="243231.GSU2050"/>
<dbReference type="EnsemblBacteria" id="AAR35426">
    <property type="protein sequence ID" value="AAR35426"/>
    <property type="gene ID" value="GSU2050"/>
</dbReference>
<dbReference type="KEGG" id="gsu:GSU2050"/>
<dbReference type="PATRIC" id="fig|243231.5.peg.2086"/>
<dbReference type="eggNOG" id="COG0653">
    <property type="taxonomic scope" value="Bacteria"/>
</dbReference>
<dbReference type="HOGENOM" id="CLU_005314_3_0_7"/>
<dbReference type="InParanoid" id="Q74BJ1"/>
<dbReference type="OrthoDB" id="9805579at2"/>
<dbReference type="Proteomes" id="UP000000577">
    <property type="component" value="Chromosome"/>
</dbReference>
<dbReference type="GO" id="GO:0031522">
    <property type="term" value="C:cell envelope Sec protein transport complex"/>
    <property type="evidence" value="ECO:0000318"/>
    <property type="project" value="GO_Central"/>
</dbReference>
<dbReference type="GO" id="GO:0005737">
    <property type="term" value="C:cytoplasm"/>
    <property type="evidence" value="ECO:0007669"/>
    <property type="project" value="UniProtKB-SubCell"/>
</dbReference>
<dbReference type="GO" id="GO:0005886">
    <property type="term" value="C:plasma membrane"/>
    <property type="evidence" value="ECO:0000318"/>
    <property type="project" value="GO_Central"/>
</dbReference>
<dbReference type="GO" id="GO:0005524">
    <property type="term" value="F:ATP binding"/>
    <property type="evidence" value="ECO:0000318"/>
    <property type="project" value="GO_Central"/>
</dbReference>
<dbReference type="GO" id="GO:0046872">
    <property type="term" value="F:metal ion binding"/>
    <property type="evidence" value="ECO:0007669"/>
    <property type="project" value="UniProtKB-KW"/>
</dbReference>
<dbReference type="GO" id="GO:0008564">
    <property type="term" value="F:protein-exporting ATPase activity"/>
    <property type="evidence" value="ECO:0007669"/>
    <property type="project" value="UniProtKB-EC"/>
</dbReference>
<dbReference type="GO" id="GO:0065002">
    <property type="term" value="P:intracellular protein transmembrane transport"/>
    <property type="evidence" value="ECO:0007669"/>
    <property type="project" value="UniProtKB-UniRule"/>
</dbReference>
<dbReference type="GO" id="GO:0017038">
    <property type="term" value="P:protein import"/>
    <property type="evidence" value="ECO:0007669"/>
    <property type="project" value="InterPro"/>
</dbReference>
<dbReference type="GO" id="GO:0006605">
    <property type="term" value="P:protein targeting"/>
    <property type="evidence" value="ECO:0007669"/>
    <property type="project" value="UniProtKB-UniRule"/>
</dbReference>
<dbReference type="GO" id="GO:0043952">
    <property type="term" value="P:protein transport by the Sec complex"/>
    <property type="evidence" value="ECO:0000318"/>
    <property type="project" value="GO_Central"/>
</dbReference>
<dbReference type="CDD" id="cd17928">
    <property type="entry name" value="DEXDc_SecA"/>
    <property type="match status" value="1"/>
</dbReference>
<dbReference type="CDD" id="cd18803">
    <property type="entry name" value="SF2_C_secA"/>
    <property type="match status" value="1"/>
</dbReference>
<dbReference type="FunFam" id="3.40.50.300:FF:000113">
    <property type="entry name" value="Preprotein translocase subunit SecA"/>
    <property type="match status" value="1"/>
</dbReference>
<dbReference type="FunFam" id="3.90.1440.10:FF:000001">
    <property type="entry name" value="Preprotein translocase subunit SecA"/>
    <property type="match status" value="1"/>
</dbReference>
<dbReference type="FunFam" id="1.10.3060.10:FF:000003">
    <property type="entry name" value="Protein translocase subunit SecA"/>
    <property type="match status" value="1"/>
</dbReference>
<dbReference type="FunFam" id="3.40.50.300:FF:000334">
    <property type="entry name" value="Protein translocase subunit SecA"/>
    <property type="match status" value="1"/>
</dbReference>
<dbReference type="Gene3D" id="1.10.3060.10">
    <property type="entry name" value="Helical scaffold and wing domains of SecA"/>
    <property type="match status" value="1"/>
</dbReference>
<dbReference type="Gene3D" id="3.40.50.300">
    <property type="entry name" value="P-loop containing nucleotide triphosphate hydrolases"/>
    <property type="match status" value="2"/>
</dbReference>
<dbReference type="Gene3D" id="3.90.1440.10">
    <property type="entry name" value="SecA, preprotein cross-linking domain"/>
    <property type="match status" value="1"/>
</dbReference>
<dbReference type="HAMAP" id="MF_01382">
    <property type="entry name" value="SecA"/>
    <property type="match status" value="1"/>
</dbReference>
<dbReference type="InterPro" id="IPR014001">
    <property type="entry name" value="Helicase_ATP-bd"/>
</dbReference>
<dbReference type="InterPro" id="IPR001650">
    <property type="entry name" value="Helicase_C-like"/>
</dbReference>
<dbReference type="InterPro" id="IPR027417">
    <property type="entry name" value="P-loop_NTPase"/>
</dbReference>
<dbReference type="InterPro" id="IPR004027">
    <property type="entry name" value="SEC_C_motif"/>
</dbReference>
<dbReference type="InterPro" id="IPR000185">
    <property type="entry name" value="SecA"/>
</dbReference>
<dbReference type="InterPro" id="IPR020937">
    <property type="entry name" value="SecA_CS"/>
</dbReference>
<dbReference type="InterPro" id="IPR011115">
    <property type="entry name" value="SecA_DEAD"/>
</dbReference>
<dbReference type="InterPro" id="IPR014018">
    <property type="entry name" value="SecA_motor_DEAD"/>
</dbReference>
<dbReference type="InterPro" id="IPR011130">
    <property type="entry name" value="SecA_preprotein_X-link_dom"/>
</dbReference>
<dbReference type="InterPro" id="IPR044722">
    <property type="entry name" value="SecA_SF2_C"/>
</dbReference>
<dbReference type="InterPro" id="IPR011116">
    <property type="entry name" value="SecA_Wing/Scaffold"/>
</dbReference>
<dbReference type="InterPro" id="IPR036266">
    <property type="entry name" value="SecA_Wing/Scaffold_sf"/>
</dbReference>
<dbReference type="InterPro" id="IPR036670">
    <property type="entry name" value="SecA_X-link_sf"/>
</dbReference>
<dbReference type="NCBIfam" id="NF009538">
    <property type="entry name" value="PRK12904.1"/>
    <property type="match status" value="1"/>
</dbReference>
<dbReference type="NCBIfam" id="TIGR00963">
    <property type="entry name" value="secA"/>
    <property type="match status" value="1"/>
</dbReference>
<dbReference type="PANTHER" id="PTHR30612:SF0">
    <property type="entry name" value="CHLOROPLAST PROTEIN-TRANSPORTING ATPASE"/>
    <property type="match status" value="1"/>
</dbReference>
<dbReference type="PANTHER" id="PTHR30612">
    <property type="entry name" value="SECA INNER MEMBRANE COMPONENT OF SEC PROTEIN SECRETION SYSTEM"/>
    <property type="match status" value="1"/>
</dbReference>
<dbReference type="Pfam" id="PF21090">
    <property type="entry name" value="P-loop_SecA"/>
    <property type="match status" value="1"/>
</dbReference>
<dbReference type="Pfam" id="PF02810">
    <property type="entry name" value="SEC-C"/>
    <property type="match status" value="1"/>
</dbReference>
<dbReference type="Pfam" id="PF07517">
    <property type="entry name" value="SecA_DEAD"/>
    <property type="match status" value="1"/>
</dbReference>
<dbReference type="Pfam" id="PF01043">
    <property type="entry name" value="SecA_PP_bind"/>
    <property type="match status" value="1"/>
</dbReference>
<dbReference type="Pfam" id="PF07516">
    <property type="entry name" value="SecA_SW"/>
    <property type="match status" value="1"/>
</dbReference>
<dbReference type="PRINTS" id="PR00906">
    <property type="entry name" value="SECA"/>
</dbReference>
<dbReference type="SMART" id="SM00957">
    <property type="entry name" value="SecA_DEAD"/>
    <property type="match status" value="1"/>
</dbReference>
<dbReference type="SMART" id="SM00958">
    <property type="entry name" value="SecA_PP_bind"/>
    <property type="match status" value="1"/>
</dbReference>
<dbReference type="SUPFAM" id="SSF81886">
    <property type="entry name" value="Helical scaffold and wing domains of SecA"/>
    <property type="match status" value="1"/>
</dbReference>
<dbReference type="SUPFAM" id="SSF52540">
    <property type="entry name" value="P-loop containing nucleoside triphosphate hydrolases"/>
    <property type="match status" value="2"/>
</dbReference>
<dbReference type="SUPFAM" id="SSF81767">
    <property type="entry name" value="Pre-protein crosslinking domain of SecA"/>
    <property type="match status" value="1"/>
</dbReference>
<dbReference type="PROSITE" id="PS01312">
    <property type="entry name" value="SECA"/>
    <property type="match status" value="1"/>
</dbReference>
<dbReference type="PROSITE" id="PS51196">
    <property type="entry name" value="SECA_MOTOR_DEAD"/>
    <property type="match status" value="1"/>
</dbReference>
<name>SECA_GEOSL</name>
<sequence length="897" mass="102441">MFGAIIKKIVGSKNERELKRMWPVVEKINGLESQVAGLTDDQLREKTFEFKERIARGESLESLLPEAFAVCREGGKRALGMRHFDVQLIGGMVLHQGKIAEMKTGEGKTLVATLPAYLNALTGRGVHVVTVNDYLARRDSEWMGRLYRFLGLTVGVIVHGIDDDERRAAYAADITYGTNNEFGFDYLRDNMKFALEDYVQRPFFFSIVDEVDSILIDEARTPLIISGPTEDSTDKYYIIDRIIPHLKKGEVKEVEANTLSGKRKVYTGDFTVDEKARSSSLTEEGVAKVEKLLKIDNLYDPRHMEILHHVNQALRAHALFRRDVDYVVKDGEVIIVDEFTGRLMPGRRWSDGLHQAIEAKEGVEIENENQTLATITFQNYFRMYEKLSGMTGTADTEAEEFHKIYKLEVTVIPTNRPLLRPDFPDVIYKTEREKFNAVIEEIKGCHEKGQPTLVGTISIEKSEVLAEILRKQGIPHNVLNAKQHEREAEIVAQAGRKGMVTIATNMAGRGTDILLGGNPEGLAKQWRRANPDAPEEEYEKVLAEYRTLCAREHDEVVALGGLHIIGTERHESRRIDNQLRGRSGRQGDPGSSRFYLSLEDDLLRIFGSERVSKIMDFLKIEEGEAITHGMITKAIENAQKKVEAHNFEIRKHLIEYDDVMNKQREVIYTQRREILAGQDIRRHFTQMMDDTIEEISSFAIEKVSAHEWDWQSIGEGILKTYGFQIDIPPQTMDRLSPESFRTLLKEKVHEAFDAKVAAFGDELMDHLIKVIMLQTIDAQWKDHLLSIDHLKEGIGLRGYGQKDPKQEYKKEAYQLFMDMMARIAAETVEKIFWVQIAHEEDVERMEEEQQKQARKKMVFNLVDEDETSEPSKSKKLAGRNEPCPCGSGKKYKKCCGK</sequence>
<feature type="chain" id="PRO_0000318360" description="Protein translocase subunit SecA">
    <location>
        <begin position="1"/>
        <end position="897"/>
    </location>
</feature>
<feature type="region of interest" description="Disordered" evidence="2">
    <location>
        <begin position="846"/>
        <end position="897"/>
    </location>
</feature>
<feature type="binding site" evidence="1">
    <location>
        <position position="87"/>
    </location>
    <ligand>
        <name>ATP</name>
        <dbReference type="ChEBI" id="CHEBI:30616"/>
    </ligand>
</feature>
<feature type="binding site" evidence="1">
    <location>
        <begin position="105"/>
        <end position="109"/>
    </location>
    <ligand>
        <name>ATP</name>
        <dbReference type="ChEBI" id="CHEBI:30616"/>
    </ligand>
</feature>
<feature type="binding site" evidence="1">
    <location>
        <position position="512"/>
    </location>
    <ligand>
        <name>ATP</name>
        <dbReference type="ChEBI" id="CHEBI:30616"/>
    </ligand>
</feature>
<feature type="binding site" evidence="1">
    <location>
        <position position="883"/>
    </location>
    <ligand>
        <name>Zn(2+)</name>
        <dbReference type="ChEBI" id="CHEBI:29105"/>
    </ligand>
</feature>
<feature type="binding site" evidence="1">
    <location>
        <position position="885"/>
    </location>
    <ligand>
        <name>Zn(2+)</name>
        <dbReference type="ChEBI" id="CHEBI:29105"/>
    </ligand>
</feature>
<feature type="binding site" evidence="1">
    <location>
        <position position="894"/>
    </location>
    <ligand>
        <name>Zn(2+)</name>
        <dbReference type="ChEBI" id="CHEBI:29105"/>
    </ligand>
</feature>
<feature type="binding site" evidence="1">
    <location>
        <position position="895"/>
    </location>
    <ligand>
        <name>Zn(2+)</name>
        <dbReference type="ChEBI" id="CHEBI:29105"/>
    </ligand>
</feature>
<keyword id="KW-0067">ATP-binding</keyword>
<keyword id="KW-0997">Cell inner membrane</keyword>
<keyword id="KW-1003">Cell membrane</keyword>
<keyword id="KW-0963">Cytoplasm</keyword>
<keyword id="KW-0472">Membrane</keyword>
<keyword id="KW-0479">Metal-binding</keyword>
<keyword id="KW-0547">Nucleotide-binding</keyword>
<keyword id="KW-0653">Protein transport</keyword>
<keyword id="KW-1185">Reference proteome</keyword>
<keyword id="KW-1278">Translocase</keyword>
<keyword id="KW-0811">Translocation</keyword>
<keyword id="KW-0813">Transport</keyword>
<keyword id="KW-0862">Zinc</keyword>
<reference key="1">
    <citation type="journal article" date="2003" name="Science">
        <title>Genome of Geobacter sulfurreducens: metal reduction in subsurface environments.</title>
        <authorList>
            <person name="Methe B.A."/>
            <person name="Nelson K.E."/>
            <person name="Eisen J.A."/>
            <person name="Paulsen I.T."/>
            <person name="Nelson W.C."/>
            <person name="Heidelberg J.F."/>
            <person name="Wu D."/>
            <person name="Wu M."/>
            <person name="Ward N.L."/>
            <person name="Beanan M.J."/>
            <person name="Dodson R.J."/>
            <person name="Madupu R."/>
            <person name="Brinkac L.M."/>
            <person name="Daugherty S.C."/>
            <person name="DeBoy R.T."/>
            <person name="Durkin A.S."/>
            <person name="Gwinn M.L."/>
            <person name="Kolonay J.F."/>
            <person name="Sullivan S.A."/>
            <person name="Haft D.H."/>
            <person name="Selengut J."/>
            <person name="Davidsen T.M."/>
            <person name="Zafar N."/>
            <person name="White O."/>
            <person name="Tran B."/>
            <person name="Romero C."/>
            <person name="Forberger H.A."/>
            <person name="Weidman J.F."/>
            <person name="Khouri H.M."/>
            <person name="Feldblyum T.V."/>
            <person name="Utterback T.R."/>
            <person name="Van Aken S.E."/>
            <person name="Lovley D.R."/>
            <person name="Fraser C.M."/>
        </authorList>
    </citation>
    <scope>NUCLEOTIDE SEQUENCE [LARGE SCALE GENOMIC DNA]</scope>
    <source>
        <strain>ATCC 51573 / DSM 12127 / PCA</strain>
    </source>
</reference>
<accession>Q74BJ1</accession>